<organism>
    <name type="scientific">Acinetobacter baumannii (strain AB307-0294)</name>
    <dbReference type="NCBI Taxonomy" id="557600"/>
    <lineage>
        <taxon>Bacteria</taxon>
        <taxon>Pseudomonadati</taxon>
        <taxon>Pseudomonadota</taxon>
        <taxon>Gammaproteobacteria</taxon>
        <taxon>Moraxellales</taxon>
        <taxon>Moraxellaceae</taxon>
        <taxon>Acinetobacter</taxon>
        <taxon>Acinetobacter calcoaceticus/baumannii complex</taxon>
    </lineage>
</organism>
<proteinExistence type="inferred from homology"/>
<protein>
    <recommendedName>
        <fullName evidence="1">Arginine--tRNA ligase</fullName>
        <ecNumber evidence="1">6.1.1.19</ecNumber>
    </recommendedName>
    <alternativeName>
        <fullName evidence="1">Arginyl-tRNA synthetase</fullName>
        <shortName evidence="1">ArgRS</shortName>
    </alternativeName>
</protein>
<sequence length="596" mass="66306">MNTAIQAALDHAVQTLQQEGVLPSDWNNSSNLTRTKDRSHGDFASNIAMIGSKAAGMKPRDLAEKILAALPEVADISKAEIAGPGFINFFLNADQRFAILDQIQAQKESFGRSQSNAAKKIQVEFVSANPTSSLHVGHGRGAAYGMTVANLLEATGAKVDREYYVNDAGRQMDILATSTYLRYLELLGQNLVFPKNAYQGDYVKEIAQGIIDKDGDAYVREVANVYKDVPEDVQYAEELDSEGNKVVLSGDKEKHIDGLIANSQQLLGEGYRVFHQAALHAILDDIKDDLADFGVTFNQWFSEASLSAKIDEALETLDQRGFLYEKDGNIWFKSTEFGDEKDRVVKRRNGQTTYFASDIAYHLNKLQRGYTDLVDIWGSDHHGYISRVKAAIDAMGYDSKKLTVLLVQFVSLWRGGEMVQMSSRSGQFVTLRDLRKEVGNDAARFYYVMRKSEQHIDFDLDLAVSQSKDNAVYYIQYAHARICRMLEKAASTGLQFEVSAARSHAARLSLDAETEILAKLAAYPDVVLRAANAYEPHQVGNYLKELAALFHGWYNEHKVLSDDAELTQARLLLSINVQQVLRNGLELLGVSAPEAM</sequence>
<keyword id="KW-0030">Aminoacyl-tRNA synthetase</keyword>
<keyword id="KW-0067">ATP-binding</keyword>
<keyword id="KW-0963">Cytoplasm</keyword>
<keyword id="KW-0436">Ligase</keyword>
<keyword id="KW-0547">Nucleotide-binding</keyword>
<keyword id="KW-0648">Protein biosynthesis</keyword>
<comment type="catalytic activity">
    <reaction evidence="1">
        <text>tRNA(Arg) + L-arginine + ATP = L-arginyl-tRNA(Arg) + AMP + diphosphate</text>
        <dbReference type="Rhea" id="RHEA:20301"/>
        <dbReference type="Rhea" id="RHEA-COMP:9658"/>
        <dbReference type="Rhea" id="RHEA-COMP:9673"/>
        <dbReference type="ChEBI" id="CHEBI:30616"/>
        <dbReference type="ChEBI" id="CHEBI:32682"/>
        <dbReference type="ChEBI" id="CHEBI:33019"/>
        <dbReference type="ChEBI" id="CHEBI:78442"/>
        <dbReference type="ChEBI" id="CHEBI:78513"/>
        <dbReference type="ChEBI" id="CHEBI:456215"/>
        <dbReference type="EC" id="6.1.1.19"/>
    </reaction>
</comment>
<comment type="subunit">
    <text evidence="1">Monomer.</text>
</comment>
<comment type="subcellular location">
    <subcellularLocation>
        <location evidence="1">Cytoplasm</location>
    </subcellularLocation>
</comment>
<comment type="similarity">
    <text evidence="1">Belongs to the class-I aminoacyl-tRNA synthetase family.</text>
</comment>
<reference key="1">
    <citation type="journal article" date="2008" name="J. Bacteriol.">
        <title>Comparative genome sequence analysis of multidrug-resistant Acinetobacter baumannii.</title>
        <authorList>
            <person name="Adams M.D."/>
            <person name="Goglin K."/>
            <person name="Molyneaux N."/>
            <person name="Hujer K.M."/>
            <person name="Lavender H."/>
            <person name="Jamison J.J."/>
            <person name="MacDonald I.J."/>
            <person name="Martin K.M."/>
            <person name="Russo T."/>
            <person name="Campagnari A.A."/>
            <person name="Hujer A.M."/>
            <person name="Bonomo R.A."/>
            <person name="Gill S.R."/>
        </authorList>
    </citation>
    <scope>NUCLEOTIDE SEQUENCE [LARGE SCALE GENOMIC DNA]</scope>
    <source>
        <strain>AB307-0294</strain>
    </source>
</reference>
<evidence type="ECO:0000255" key="1">
    <source>
        <dbReference type="HAMAP-Rule" id="MF_00123"/>
    </source>
</evidence>
<dbReference type="EC" id="6.1.1.19" evidence="1"/>
<dbReference type="EMBL" id="CP001172">
    <property type="protein sequence ID" value="ACJ57690.1"/>
    <property type="molecule type" value="Genomic_DNA"/>
</dbReference>
<dbReference type="RefSeq" id="WP_001090284.1">
    <property type="nucleotide sequence ID" value="NZ_CP001172.1"/>
</dbReference>
<dbReference type="SMR" id="B7H2A9"/>
<dbReference type="GeneID" id="92892152"/>
<dbReference type="HOGENOM" id="CLU_006406_0_1_6"/>
<dbReference type="Proteomes" id="UP000006924">
    <property type="component" value="Chromosome"/>
</dbReference>
<dbReference type="GO" id="GO:0005737">
    <property type="term" value="C:cytoplasm"/>
    <property type="evidence" value="ECO:0007669"/>
    <property type="project" value="UniProtKB-SubCell"/>
</dbReference>
<dbReference type="GO" id="GO:0004814">
    <property type="term" value="F:arginine-tRNA ligase activity"/>
    <property type="evidence" value="ECO:0007669"/>
    <property type="project" value="UniProtKB-UniRule"/>
</dbReference>
<dbReference type="GO" id="GO:0005524">
    <property type="term" value="F:ATP binding"/>
    <property type="evidence" value="ECO:0007669"/>
    <property type="project" value="UniProtKB-UniRule"/>
</dbReference>
<dbReference type="GO" id="GO:0006420">
    <property type="term" value="P:arginyl-tRNA aminoacylation"/>
    <property type="evidence" value="ECO:0007669"/>
    <property type="project" value="UniProtKB-UniRule"/>
</dbReference>
<dbReference type="CDD" id="cd00671">
    <property type="entry name" value="ArgRS_core"/>
    <property type="match status" value="1"/>
</dbReference>
<dbReference type="FunFam" id="1.10.730.10:FF:000008">
    <property type="entry name" value="Arginine--tRNA ligase"/>
    <property type="match status" value="1"/>
</dbReference>
<dbReference type="Gene3D" id="3.30.1360.70">
    <property type="entry name" value="Arginyl tRNA synthetase N-terminal domain"/>
    <property type="match status" value="1"/>
</dbReference>
<dbReference type="Gene3D" id="3.40.50.620">
    <property type="entry name" value="HUPs"/>
    <property type="match status" value="1"/>
</dbReference>
<dbReference type="Gene3D" id="1.10.730.10">
    <property type="entry name" value="Isoleucyl-tRNA Synthetase, Domain 1"/>
    <property type="match status" value="1"/>
</dbReference>
<dbReference type="HAMAP" id="MF_00123">
    <property type="entry name" value="Arg_tRNA_synth"/>
    <property type="match status" value="1"/>
</dbReference>
<dbReference type="InterPro" id="IPR001278">
    <property type="entry name" value="Arg-tRNA-ligase"/>
</dbReference>
<dbReference type="InterPro" id="IPR005148">
    <property type="entry name" value="Arg-tRNA-synth_N"/>
</dbReference>
<dbReference type="InterPro" id="IPR036695">
    <property type="entry name" value="Arg-tRNA-synth_N_sf"/>
</dbReference>
<dbReference type="InterPro" id="IPR035684">
    <property type="entry name" value="ArgRS_core"/>
</dbReference>
<dbReference type="InterPro" id="IPR008909">
    <property type="entry name" value="DALR_anticod-bd"/>
</dbReference>
<dbReference type="InterPro" id="IPR014729">
    <property type="entry name" value="Rossmann-like_a/b/a_fold"/>
</dbReference>
<dbReference type="InterPro" id="IPR009080">
    <property type="entry name" value="tRNAsynth_Ia_anticodon-bd"/>
</dbReference>
<dbReference type="NCBIfam" id="TIGR00456">
    <property type="entry name" value="argS"/>
    <property type="match status" value="1"/>
</dbReference>
<dbReference type="PANTHER" id="PTHR11956:SF5">
    <property type="entry name" value="ARGININE--TRNA LIGASE, CYTOPLASMIC"/>
    <property type="match status" value="1"/>
</dbReference>
<dbReference type="PANTHER" id="PTHR11956">
    <property type="entry name" value="ARGINYL-TRNA SYNTHETASE"/>
    <property type="match status" value="1"/>
</dbReference>
<dbReference type="Pfam" id="PF03485">
    <property type="entry name" value="Arg_tRNA_synt_N"/>
    <property type="match status" value="1"/>
</dbReference>
<dbReference type="Pfam" id="PF05746">
    <property type="entry name" value="DALR_1"/>
    <property type="match status" value="1"/>
</dbReference>
<dbReference type="Pfam" id="PF00750">
    <property type="entry name" value="tRNA-synt_1d"/>
    <property type="match status" value="2"/>
</dbReference>
<dbReference type="PRINTS" id="PR01038">
    <property type="entry name" value="TRNASYNTHARG"/>
</dbReference>
<dbReference type="SMART" id="SM01016">
    <property type="entry name" value="Arg_tRNA_synt_N"/>
    <property type="match status" value="1"/>
</dbReference>
<dbReference type="SMART" id="SM00836">
    <property type="entry name" value="DALR_1"/>
    <property type="match status" value="1"/>
</dbReference>
<dbReference type="SUPFAM" id="SSF47323">
    <property type="entry name" value="Anticodon-binding domain of a subclass of class I aminoacyl-tRNA synthetases"/>
    <property type="match status" value="1"/>
</dbReference>
<dbReference type="SUPFAM" id="SSF55190">
    <property type="entry name" value="Arginyl-tRNA synthetase (ArgRS), N-terminal 'additional' domain"/>
    <property type="match status" value="1"/>
</dbReference>
<dbReference type="SUPFAM" id="SSF52374">
    <property type="entry name" value="Nucleotidylyl transferase"/>
    <property type="match status" value="1"/>
</dbReference>
<gene>
    <name evidence="1" type="primary">argS</name>
    <name type="ordered locus">ABBFA_003380</name>
</gene>
<feature type="chain" id="PRO_1000198865" description="Arginine--tRNA ligase">
    <location>
        <begin position="1"/>
        <end position="596"/>
    </location>
</feature>
<feature type="short sequence motif" description="'HIGH' region">
    <location>
        <begin position="128"/>
        <end position="138"/>
    </location>
</feature>
<accession>B7H2A9</accession>
<name>SYR_ACIB3</name>